<protein>
    <recommendedName>
        <fullName evidence="1">Triosephosphate isomerase</fullName>
        <shortName evidence="1">TIM</shortName>
        <shortName evidence="1">TPI</shortName>
        <ecNumber evidence="1">5.3.1.1</ecNumber>
    </recommendedName>
    <alternativeName>
        <fullName evidence="1">Triose-phosphate isomerase</fullName>
    </alternativeName>
</protein>
<accession>Q7VGK6</accession>
<evidence type="ECO:0000255" key="1">
    <source>
        <dbReference type="HAMAP-Rule" id="MF_00147"/>
    </source>
</evidence>
<proteinExistence type="inferred from homology"/>
<name>TPIS_HELHP</name>
<gene>
    <name evidence="1" type="primary">tpiA</name>
    <name type="synonym">tpi</name>
    <name type="ordered locus">HH_1315</name>
</gene>
<dbReference type="EC" id="5.3.1.1" evidence="1"/>
<dbReference type="EMBL" id="AE017125">
    <property type="protein sequence ID" value="AAP77912.1"/>
    <property type="molecule type" value="Genomic_DNA"/>
</dbReference>
<dbReference type="RefSeq" id="WP_011116155.1">
    <property type="nucleotide sequence ID" value="NC_004917.1"/>
</dbReference>
<dbReference type="SMR" id="Q7VGK6"/>
<dbReference type="STRING" id="235279.HH_1315"/>
<dbReference type="KEGG" id="hhe:HH_1315"/>
<dbReference type="eggNOG" id="COG0149">
    <property type="taxonomic scope" value="Bacteria"/>
</dbReference>
<dbReference type="HOGENOM" id="CLU_024251_2_3_7"/>
<dbReference type="UniPathway" id="UPA00109">
    <property type="reaction ID" value="UER00189"/>
</dbReference>
<dbReference type="UniPathway" id="UPA00138"/>
<dbReference type="Proteomes" id="UP000002495">
    <property type="component" value="Chromosome"/>
</dbReference>
<dbReference type="GO" id="GO:0005829">
    <property type="term" value="C:cytosol"/>
    <property type="evidence" value="ECO:0007669"/>
    <property type="project" value="TreeGrafter"/>
</dbReference>
<dbReference type="GO" id="GO:0004807">
    <property type="term" value="F:triose-phosphate isomerase activity"/>
    <property type="evidence" value="ECO:0007669"/>
    <property type="project" value="UniProtKB-UniRule"/>
</dbReference>
<dbReference type="GO" id="GO:0006094">
    <property type="term" value="P:gluconeogenesis"/>
    <property type="evidence" value="ECO:0007669"/>
    <property type="project" value="UniProtKB-UniRule"/>
</dbReference>
<dbReference type="GO" id="GO:0046166">
    <property type="term" value="P:glyceraldehyde-3-phosphate biosynthetic process"/>
    <property type="evidence" value="ECO:0007669"/>
    <property type="project" value="TreeGrafter"/>
</dbReference>
<dbReference type="GO" id="GO:0019563">
    <property type="term" value="P:glycerol catabolic process"/>
    <property type="evidence" value="ECO:0007669"/>
    <property type="project" value="TreeGrafter"/>
</dbReference>
<dbReference type="GO" id="GO:0006096">
    <property type="term" value="P:glycolytic process"/>
    <property type="evidence" value="ECO:0007669"/>
    <property type="project" value="UniProtKB-UniRule"/>
</dbReference>
<dbReference type="CDD" id="cd00311">
    <property type="entry name" value="TIM"/>
    <property type="match status" value="1"/>
</dbReference>
<dbReference type="Gene3D" id="3.20.20.70">
    <property type="entry name" value="Aldolase class I"/>
    <property type="match status" value="1"/>
</dbReference>
<dbReference type="HAMAP" id="MF_00147_B">
    <property type="entry name" value="TIM_B"/>
    <property type="match status" value="1"/>
</dbReference>
<dbReference type="InterPro" id="IPR013785">
    <property type="entry name" value="Aldolase_TIM"/>
</dbReference>
<dbReference type="InterPro" id="IPR035990">
    <property type="entry name" value="TIM_sf"/>
</dbReference>
<dbReference type="InterPro" id="IPR022896">
    <property type="entry name" value="TrioseP_Isoase_bac/euk"/>
</dbReference>
<dbReference type="InterPro" id="IPR000652">
    <property type="entry name" value="Triosephosphate_isomerase"/>
</dbReference>
<dbReference type="InterPro" id="IPR020861">
    <property type="entry name" value="Triosephosphate_isomerase_AS"/>
</dbReference>
<dbReference type="NCBIfam" id="NF000728">
    <property type="entry name" value="PRK00042.3-2"/>
    <property type="match status" value="1"/>
</dbReference>
<dbReference type="PANTHER" id="PTHR21139">
    <property type="entry name" value="TRIOSEPHOSPHATE ISOMERASE"/>
    <property type="match status" value="1"/>
</dbReference>
<dbReference type="PANTHER" id="PTHR21139:SF42">
    <property type="entry name" value="TRIOSEPHOSPHATE ISOMERASE"/>
    <property type="match status" value="1"/>
</dbReference>
<dbReference type="Pfam" id="PF00121">
    <property type="entry name" value="TIM"/>
    <property type="match status" value="1"/>
</dbReference>
<dbReference type="SUPFAM" id="SSF51351">
    <property type="entry name" value="Triosephosphate isomerase (TIM)"/>
    <property type="match status" value="1"/>
</dbReference>
<dbReference type="PROSITE" id="PS00171">
    <property type="entry name" value="TIM_1"/>
    <property type="match status" value="1"/>
</dbReference>
<dbReference type="PROSITE" id="PS51440">
    <property type="entry name" value="TIM_2"/>
    <property type="match status" value="1"/>
</dbReference>
<feature type="chain" id="PRO_0000090227" description="Triosephosphate isomerase">
    <location>
        <begin position="1"/>
        <end position="235"/>
    </location>
</feature>
<feature type="active site" description="Electrophile" evidence="1">
    <location>
        <position position="92"/>
    </location>
</feature>
<feature type="active site" description="Proton acceptor" evidence="1">
    <location>
        <position position="161"/>
    </location>
</feature>
<feature type="binding site" evidence="1">
    <location>
        <begin position="7"/>
        <end position="9"/>
    </location>
    <ligand>
        <name>substrate</name>
    </ligand>
</feature>
<feature type="binding site" evidence="1">
    <location>
        <position position="167"/>
    </location>
    <ligand>
        <name>substrate</name>
    </ligand>
</feature>
<feature type="binding site" evidence="1">
    <location>
        <position position="197"/>
    </location>
    <ligand>
        <name>substrate</name>
    </ligand>
</feature>
<keyword id="KW-0963">Cytoplasm</keyword>
<keyword id="KW-0312">Gluconeogenesis</keyword>
<keyword id="KW-0324">Glycolysis</keyword>
<keyword id="KW-0413">Isomerase</keyword>
<keyword id="KW-1185">Reference proteome</keyword>
<sequence length="235" mass="25997">MTIIAGNFKANLTRIQVATFAKELDSILTDMQTSSHLQVDIFPSHTALLTNNFKHFHIGAQNAYFAQNGGFTGEIGLSQLQEFNINRLIIGHSERRTLFGENQDFINKKFRFYAEAGFEIYYCIGEPLSMRQKGKNALKDFLGAQLDGIDITYPKLIIAYEPIWAIGTGESATLEQIESTHSMLATFTSAPLLYGGSVNPTNAREILCTPYVNGVLVGSASLNIQSFTDIIRASK</sequence>
<comment type="function">
    <text evidence="1">Involved in the gluconeogenesis. Catalyzes stereospecifically the conversion of dihydroxyacetone phosphate (DHAP) to D-glyceraldehyde-3-phosphate (G3P).</text>
</comment>
<comment type="catalytic activity">
    <reaction evidence="1">
        <text>D-glyceraldehyde 3-phosphate = dihydroxyacetone phosphate</text>
        <dbReference type="Rhea" id="RHEA:18585"/>
        <dbReference type="ChEBI" id="CHEBI:57642"/>
        <dbReference type="ChEBI" id="CHEBI:59776"/>
        <dbReference type="EC" id="5.3.1.1"/>
    </reaction>
</comment>
<comment type="pathway">
    <text evidence="1">Carbohydrate biosynthesis; gluconeogenesis.</text>
</comment>
<comment type="pathway">
    <text evidence="1">Carbohydrate degradation; glycolysis; D-glyceraldehyde 3-phosphate from glycerone phosphate: step 1/1.</text>
</comment>
<comment type="subunit">
    <text evidence="1">Homodimer.</text>
</comment>
<comment type="subcellular location">
    <subcellularLocation>
        <location evidence="1">Cytoplasm</location>
    </subcellularLocation>
</comment>
<comment type="similarity">
    <text evidence="1">Belongs to the triosephosphate isomerase family.</text>
</comment>
<reference key="1">
    <citation type="journal article" date="2003" name="Proc. Natl. Acad. Sci. U.S.A.">
        <title>The complete genome sequence of the carcinogenic bacterium Helicobacter hepaticus.</title>
        <authorList>
            <person name="Suerbaum S."/>
            <person name="Josenhans C."/>
            <person name="Sterzenbach T."/>
            <person name="Drescher B."/>
            <person name="Brandt P."/>
            <person name="Bell M."/>
            <person name="Droege M."/>
            <person name="Fartmann B."/>
            <person name="Fischer H.-P."/>
            <person name="Ge Z."/>
            <person name="Hoerster A."/>
            <person name="Holland R."/>
            <person name="Klein K."/>
            <person name="Koenig J."/>
            <person name="Macko L."/>
            <person name="Mendz G.L."/>
            <person name="Nyakatura G."/>
            <person name="Schauer D.B."/>
            <person name="Shen Z."/>
            <person name="Weber J."/>
            <person name="Frosch M."/>
            <person name="Fox J.G."/>
        </authorList>
    </citation>
    <scope>NUCLEOTIDE SEQUENCE [LARGE SCALE GENOMIC DNA]</scope>
    <source>
        <strain>ATCC 51449 / 3B1</strain>
    </source>
</reference>
<organism>
    <name type="scientific">Helicobacter hepaticus (strain ATCC 51449 / 3B1)</name>
    <dbReference type="NCBI Taxonomy" id="235279"/>
    <lineage>
        <taxon>Bacteria</taxon>
        <taxon>Pseudomonadati</taxon>
        <taxon>Campylobacterota</taxon>
        <taxon>Epsilonproteobacteria</taxon>
        <taxon>Campylobacterales</taxon>
        <taxon>Helicobacteraceae</taxon>
        <taxon>Helicobacter</taxon>
    </lineage>
</organism>